<reference key="1">
    <citation type="journal article" date="2008" name="Genome Res.">
        <title>Genome sequence of the beta-rhizobium Cupriavidus taiwanensis and comparative genomics of rhizobia.</title>
        <authorList>
            <person name="Amadou C."/>
            <person name="Pascal G."/>
            <person name="Mangenot S."/>
            <person name="Glew M."/>
            <person name="Bontemps C."/>
            <person name="Capela D."/>
            <person name="Carrere S."/>
            <person name="Cruveiller S."/>
            <person name="Dossat C."/>
            <person name="Lajus A."/>
            <person name="Marchetti M."/>
            <person name="Poinsot V."/>
            <person name="Rouy Z."/>
            <person name="Servin B."/>
            <person name="Saad M."/>
            <person name="Schenowitz C."/>
            <person name="Barbe V."/>
            <person name="Batut J."/>
            <person name="Medigue C."/>
            <person name="Masson-Boivin C."/>
        </authorList>
    </citation>
    <scope>NUCLEOTIDE SEQUENCE [LARGE SCALE GENOMIC DNA]</scope>
    <source>
        <strain>DSM 17343 / BCRC 17206 / CCUG 44338 / CIP 107171 / LMG 19424 / R1</strain>
    </source>
</reference>
<evidence type="ECO:0000255" key="1">
    <source>
        <dbReference type="HAMAP-Rule" id="MF_00016"/>
    </source>
</evidence>
<sequence length="354" mass="38791">MIETDKLAAPARVIAATPASSQEEAFERALRPKLLDEYVGQEKVRGQLDIFMHAARKRREALDHVLLFGPPGLGKTTLAHIIAREMGVSLRQTSGPVLERPGDLAALLTNLEANDVLFIDEIHRLSPVVEEILYPALEDYQIDIMIGEGPAARSVKLDLQPFTLVGATTRAGMLTNPLRDRFGIVARLEFYTAEELARIVTRSAQLLQARIDPQGALEIARRARGTPRIANRLLRRVRDYAEVKGDGTITREMADAALAMLDVDRVGFDLMDRKLLEAVLHKFGGGPVGVDNLAAAIGEERDTIEDVLEPYLIQQGYLQRTPRGRVATAAAYRHFGLASPQGMAGDAGELFGDA</sequence>
<organism>
    <name type="scientific">Cupriavidus taiwanensis (strain DSM 17343 / BCRC 17206 / CCUG 44338 / CIP 107171 / LMG 19424 / R1)</name>
    <name type="common">Ralstonia taiwanensis (strain LMG 19424)</name>
    <dbReference type="NCBI Taxonomy" id="977880"/>
    <lineage>
        <taxon>Bacteria</taxon>
        <taxon>Pseudomonadati</taxon>
        <taxon>Pseudomonadota</taxon>
        <taxon>Betaproteobacteria</taxon>
        <taxon>Burkholderiales</taxon>
        <taxon>Burkholderiaceae</taxon>
        <taxon>Cupriavidus</taxon>
    </lineage>
</organism>
<keyword id="KW-0067">ATP-binding</keyword>
<keyword id="KW-0963">Cytoplasm</keyword>
<keyword id="KW-0227">DNA damage</keyword>
<keyword id="KW-0233">DNA recombination</keyword>
<keyword id="KW-0234">DNA repair</keyword>
<keyword id="KW-0238">DNA-binding</keyword>
<keyword id="KW-0378">Hydrolase</keyword>
<keyword id="KW-0547">Nucleotide-binding</keyword>
<comment type="function">
    <text evidence="1">The RuvA-RuvB-RuvC complex processes Holliday junction (HJ) DNA during genetic recombination and DNA repair, while the RuvA-RuvB complex plays an important role in the rescue of blocked DNA replication forks via replication fork reversal (RFR). RuvA specifically binds to HJ cruciform DNA, conferring on it an open structure. The RuvB hexamer acts as an ATP-dependent pump, pulling dsDNA into and through the RuvAB complex. RuvB forms 2 homohexamers on either side of HJ DNA bound by 1 or 2 RuvA tetramers; 4 subunits per hexamer contact DNA at a time. Coordinated motions by a converter formed by DNA-disengaged RuvB subunits stimulates ATP hydrolysis and nucleotide exchange. Immobilization of the converter enables RuvB to convert the ATP-contained energy into a lever motion, pulling 2 nucleotides of DNA out of the RuvA tetramer per ATP hydrolyzed, thus driving DNA branch migration. The RuvB motors rotate together with the DNA substrate, which together with the progressing nucleotide cycle form the mechanistic basis for DNA recombination by continuous HJ branch migration. Branch migration allows RuvC to scan DNA until it finds its consensus sequence, where it cleaves and resolves cruciform DNA.</text>
</comment>
<comment type="catalytic activity">
    <reaction evidence="1">
        <text>ATP + H2O = ADP + phosphate + H(+)</text>
        <dbReference type="Rhea" id="RHEA:13065"/>
        <dbReference type="ChEBI" id="CHEBI:15377"/>
        <dbReference type="ChEBI" id="CHEBI:15378"/>
        <dbReference type="ChEBI" id="CHEBI:30616"/>
        <dbReference type="ChEBI" id="CHEBI:43474"/>
        <dbReference type="ChEBI" id="CHEBI:456216"/>
    </reaction>
</comment>
<comment type="subunit">
    <text evidence="1">Homohexamer. Forms an RuvA(8)-RuvB(12)-Holliday junction (HJ) complex. HJ DNA is sandwiched between 2 RuvA tetramers; dsDNA enters through RuvA and exits via RuvB. An RuvB hexamer assembles on each DNA strand where it exits the tetramer. Each RuvB hexamer is contacted by two RuvA subunits (via domain III) on 2 adjacent RuvB subunits; this complex drives branch migration. In the full resolvosome a probable DNA-RuvA(4)-RuvB(12)-RuvC(2) complex forms which resolves the HJ.</text>
</comment>
<comment type="subcellular location">
    <subcellularLocation>
        <location evidence="1">Cytoplasm</location>
    </subcellularLocation>
</comment>
<comment type="domain">
    <text evidence="1">Has 3 domains, the large (RuvB-L) and small ATPase (RuvB-S) domains and the C-terminal head (RuvB-H) domain. The head domain binds DNA, while the ATPase domains jointly bind ATP, ADP or are empty depending on the state of the subunit in the translocation cycle. During a single DNA translocation step the structure of each domain remains the same, but their relative positions change.</text>
</comment>
<comment type="similarity">
    <text evidence="1">Belongs to the RuvB family.</text>
</comment>
<name>RUVB_CUPTR</name>
<accession>B2AH72</accession>
<gene>
    <name evidence="1" type="primary">ruvB</name>
    <name type="ordered locus">RALTA_A0453</name>
</gene>
<proteinExistence type="inferred from homology"/>
<feature type="chain" id="PRO_1000089637" description="Holliday junction branch migration complex subunit RuvB">
    <location>
        <begin position="1"/>
        <end position="354"/>
    </location>
</feature>
<feature type="region of interest" description="Large ATPase domain (RuvB-L)" evidence="1">
    <location>
        <begin position="4"/>
        <end position="191"/>
    </location>
</feature>
<feature type="region of interest" description="Small ATPAse domain (RuvB-S)" evidence="1">
    <location>
        <begin position="192"/>
        <end position="262"/>
    </location>
</feature>
<feature type="region of interest" description="Head domain (RuvB-H)" evidence="1">
    <location>
        <begin position="265"/>
        <end position="354"/>
    </location>
</feature>
<feature type="binding site" evidence="1">
    <location>
        <position position="30"/>
    </location>
    <ligand>
        <name>ATP</name>
        <dbReference type="ChEBI" id="CHEBI:30616"/>
    </ligand>
</feature>
<feature type="binding site" evidence="1">
    <location>
        <position position="31"/>
    </location>
    <ligand>
        <name>ATP</name>
        <dbReference type="ChEBI" id="CHEBI:30616"/>
    </ligand>
</feature>
<feature type="binding site" evidence="1">
    <location>
        <position position="72"/>
    </location>
    <ligand>
        <name>ATP</name>
        <dbReference type="ChEBI" id="CHEBI:30616"/>
    </ligand>
</feature>
<feature type="binding site" evidence="1">
    <location>
        <position position="75"/>
    </location>
    <ligand>
        <name>ATP</name>
        <dbReference type="ChEBI" id="CHEBI:30616"/>
    </ligand>
</feature>
<feature type="binding site" evidence="1">
    <location>
        <position position="76"/>
    </location>
    <ligand>
        <name>ATP</name>
        <dbReference type="ChEBI" id="CHEBI:30616"/>
    </ligand>
</feature>
<feature type="binding site" evidence="1">
    <location>
        <position position="76"/>
    </location>
    <ligand>
        <name>Mg(2+)</name>
        <dbReference type="ChEBI" id="CHEBI:18420"/>
    </ligand>
</feature>
<feature type="binding site" evidence="1">
    <location>
        <position position="77"/>
    </location>
    <ligand>
        <name>ATP</name>
        <dbReference type="ChEBI" id="CHEBI:30616"/>
    </ligand>
</feature>
<feature type="binding site" evidence="1">
    <location>
        <begin position="138"/>
        <end position="140"/>
    </location>
    <ligand>
        <name>ATP</name>
        <dbReference type="ChEBI" id="CHEBI:30616"/>
    </ligand>
</feature>
<feature type="binding site" evidence="1">
    <location>
        <position position="181"/>
    </location>
    <ligand>
        <name>ATP</name>
        <dbReference type="ChEBI" id="CHEBI:30616"/>
    </ligand>
</feature>
<feature type="binding site" evidence="1">
    <location>
        <position position="191"/>
    </location>
    <ligand>
        <name>ATP</name>
        <dbReference type="ChEBI" id="CHEBI:30616"/>
    </ligand>
</feature>
<feature type="binding site" evidence="1">
    <location>
        <position position="228"/>
    </location>
    <ligand>
        <name>ATP</name>
        <dbReference type="ChEBI" id="CHEBI:30616"/>
    </ligand>
</feature>
<feature type="binding site" evidence="1">
    <location>
        <position position="301"/>
    </location>
    <ligand>
        <name>DNA</name>
        <dbReference type="ChEBI" id="CHEBI:16991"/>
    </ligand>
</feature>
<feature type="binding site" evidence="1">
    <location>
        <position position="320"/>
    </location>
    <ligand>
        <name>DNA</name>
        <dbReference type="ChEBI" id="CHEBI:16991"/>
    </ligand>
</feature>
<feature type="binding site" evidence="1">
    <location>
        <position position="325"/>
    </location>
    <ligand>
        <name>DNA</name>
        <dbReference type="ChEBI" id="CHEBI:16991"/>
    </ligand>
</feature>
<protein>
    <recommendedName>
        <fullName evidence="1">Holliday junction branch migration complex subunit RuvB</fullName>
        <ecNumber evidence="1">3.6.4.-</ecNumber>
    </recommendedName>
</protein>
<dbReference type="EC" id="3.6.4.-" evidence="1"/>
<dbReference type="EMBL" id="CU633749">
    <property type="protein sequence ID" value="CAP63121.1"/>
    <property type="molecule type" value="Genomic_DNA"/>
</dbReference>
<dbReference type="RefSeq" id="WP_012351782.1">
    <property type="nucleotide sequence ID" value="NC_010528.1"/>
</dbReference>
<dbReference type="SMR" id="B2AH72"/>
<dbReference type="GeneID" id="29760702"/>
<dbReference type="KEGG" id="cti:RALTA_A0453"/>
<dbReference type="eggNOG" id="COG2255">
    <property type="taxonomic scope" value="Bacteria"/>
</dbReference>
<dbReference type="HOGENOM" id="CLU_055599_1_0_4"/>
<dbReference type="BioCyc" id="CTAI977880:RALTA_RS02215-MONOMER"/>
<dbReference type="Proteomes" id="UP000001692">
    <property type="component" value="Chromosome 1"/>
</dbReference>
<dbReference type="GO" id="GO:0005737">
    <property type="term" value="C:cytoplasm"/>
    <property type="evidence" value="ECO:0007669"/>
    <property type="project" value="UniProtKB-SubCell"/>
</dbReference>
<dbReference type="GO" id="GO:0048476">
    <property type="term" value="C:Holliday junction resolvase complex"/>
    <property type="evidence" value="ECO:0007669"/>
    <property type="project" value="UniProtKB-UniRule"/>
</dbReference>
<dbReference type="GO" id="GO:0005524">
    <property type="term" value="F:ATP binding"/>
    <property type="evidence" value="ECO:0007669"/>
    <property type="project" value="UniProtKB-UniRule"/>
</dbReference>
<dbReference type="GO" id="GO:0016887">
    <property type="term" value="F:ATP hydrolysis activity"/>
    <property type="evidence" value="ECO:0007669"/>
    <property type="project" value="InterPro"/>
</dbReference>
<dbReference type="GO" id="GO:0000400">
    <property type="term" value="F:four-way junction DNA binding"/>
    <property type="evidence" value="ECO:0007669"/>
    <property type="project" value="UniProtKB-UniRule"/>
</dbReference>
<dbReference type="GO" id="GO:0009378">
    <property type="term" value="F:four-way junction helicase activity"/>
    <property type="evidence" value="ECO:0007669"/>
    <property type="project" value="InterPro"/>
</dbReference>
<dbReference type="GO" id="GO:0006310">
    <property type="term" value="P:DNA recombination"/>
    <property type="evidence" value="ECO:0007669"/>
    <property type="project" value="UniProtKB-UniRule"/>
</dbReference>
<dbReference type="GO" id="GO:0006281">
    <property type="term" value="P:DNA repair"/>
    <property type="evidence" value="ECO:0007669"/>
    <property type="project" value="UniProtKB-UniRule"/>
</dbReference>
<dbReference type="CDD" id="cd00009">
    <property type="entry name" value="AAA"/>
    <property type="match status" value="1"/>
</dbReference>
<dbReference type="FunFam" id="1.10.10.10:FF:000086">
    <property type="entry name" value="Holliday junction ATP-dependent DNA helicase RuvB"/>
    <property type="match status" value="1"/>
</dbReference>
<dbReference type="FunFam" id="1.10.8.60:FF:000023">
    <property type="entry name" value="Holliday junction ATP-dependent DNA helicase RuvB"/>
    <property type="match status" value="1"/>
</dbReference>
<dbReference type="FunFam" id="3.40.50.300:FF:000073">
    <property type="entry name" value="Holliday junction ATP-dependent DNA helicase RuvB"/>
    <property type="match status" value="1"/>
</dbReference>
<dbReference type="Gene3D" id="1.10.8.60">
    <property type="match status" value="1"/>
</dbReference>
<dbReference type="Gene3D" id="3.40.50.300">
    <property type="entry name" value="P-loop containing nucleotide triphosphate hydrolases"/>
    <property type="match status" value="1"/>
</dbReference>
<dbReference type="Gene3D" id="1.10.10.10">
    <property type="entry name" value="Winged helix-like DNA-binding domain superfamily/Winged helix DNA-binding domain"/>
    <property type="match status" value="1"/>
</dbReference>
<dbReference type="HAMAP" id="MF_00016">
    <property type="entry name" value="DNA_HJ_migration_RuvB"/>
    <property type="match status" value="1"/>
</dbReference>
<dbReference type="InterPro" id="IPR003593">
    <property type="entry name" value="AAA+_ATPase"/>
</dbReference>
<dbReference type="InterPro" id="IPR041445">
    <property type="entry name" value="AAA_lid_4"/>
</dbReference>
<dbReference type="InterPro" id="IPR004605">
    <property type="entry name" value="DNA_helicase_Holl-junc_RuvB"/>
</dbReference>
<dbReference type="InterPro" id="IPR027417">
    <property type="entry name" value="P-loop_NTPase"/>
</dbReference>
<dbReference type="InterPro" id="IPR008824">
    <property type="entry name" value="RuvB-like_N"/>
</dbReference>
<dbReference type="InterPro" id="IPR008823">
    <property type="entry name" value="RuvB_C"/>
</dbReference>
<dbReference type="InterPro" id="IPR036388">
    <property type="entry name" value="WH-like_DNA-bd_sf"/>
</dbReference>
<dbReference type="InterPro" id="IPR036390">
    <property type="entry name" value="WH_DNA-bd_sf"/>
</dbReference>
<dbReference type="NCBIfam" id="NF000868">
    <property type="entry name" value="PRK00080.1"/>
    <property type="match status" value="1"/>
</dbReference>
<dbReference type="NCBIfam" id="TIGR00635">
    <property type="entry name" value="ruvB"/>
    <property type="match status" value="1"/>
</dbReference>
<dbReference type="PANTHER" id="PTHR42848">
    <property type="match status" value="1"/>
</dbReference>
<dbReference type="PANTHER" id="PTHR42848:SF1">
    <property type="entry name" value="HOLLIDAY JUNCTION BRANCH MIGRATION COMPLEX SUBUNIT RUVB"/>
    <property type="match status" value="1"/>
</dbReference>
<dbReference type="Pfam" id="PF17864">
    <property type="entry name" value="AAA_lid_4"/>
    <property type="match status" value="1"/>
</dbReference>
<dbReference type="Pfam" id="PF05491">
    <property type="entry name" value="RuvB_C"/>
    <property type="match status" value="1"/>
</dbReference>
<dbReference type="Pfam" id="PF05496">
    <property type="entry name" value="RuvB_N"/>
    <property type="match status" value="1"/>
</dbReference>
<dbReference type="SMART" id="SM00382">
    <property type="entry name" value="AAA"/>
    <property type="match status" value="1"/>
</dbReference>
<dbReference type="SUPFAM" id="SSF52540">
    <property type="entry name" value="P-loop containing nucleoside triphosphate hydrolases"/>
    <property type="match status" value="1"/>
</dbReference>
<dbReference type="SUPFAM" id="SSF46785">
    <property type="entry name" value="Winged helix' DNA-binding domain"/>
    <property type="match status" value="1"/>
</dbReference>